<accession>A6WN13</accession>
<feature type="chain" id="PRO_1000014099" description="Ion-translocating oxidoreductase complex subunit E">
    <location>
        <begin position="1"/>
        <end position="232"/>
    </location>
</feature>
<feature type="transmembrane region" description="Helical" evidence="1">
    <location>
        <begin position="18"/>
        <end position="38"/>
    </location>
</feature>
<feature type="transmembrane region" description="Helical" evidence="1">
    <location>
        <begin position="39"/>
        <end position="59"/>
    </location>
</feature>
<feature type="transmembrane region" description="Helical" evidence="1">
    <location>
        <begin position="69"/>
        <end position="89"/>
    </location>
</feature>
<feature type="transmembrane region" description="Helical" evidence="1">
    <location>
        <begin position="93"/>
        <end position="113"/>
    </location>
</feature>
<feature type="transmembrane region" description="Helical" evidence="1">
    <location>
        <begin position="127"/>
        <end position="147"/>
    </location>
</feature>
<feature type="transmembrane region" description="Helical" evidence="1">
    <location>
        <begin position="182"/>
        <end position="202"/>
    </location>
</feature>
<comment type="function">
    <text evidence="1">Part of a membrane-bound complex that couples electron transfer with translocation of ions across the membrane.</text>
</comment>
<comment type="subunit">
    <text evidence="1">The complex is composed of six subunits: RnfA, RnfB, RnfC, RnfD, RnfE and RnfG.</text>
</comment>
<comment type="subcellular location">
    <subcellularLocation>
        <location evidence="1">Cell inner membrane</location>
        <topology evidence="1">Multi-pass membrane protein</topology>
    </subcellularLocation>
</comment>
<comment type="similarity">
    <text evidence="1">Belongs to the NqrDE/RnfAE family.</text>
</comment>
<reference key="1">
    <citation type="submission" date="2007-07" db="EMBL/GenBank/DDBJ databases">
        <title>Complete sequence of chromosome of Shewanella baltica OS185.</title>
        <authorList>
            <consortium name="US DOE Joint Genome Institute"/>
            <person name="Copeland A."/>
            <person name="Lucas S."/>
            <person name="Lapidus A."/>
            <person name="Barry K."/>
            <person name="Glavina del Rio T."/>
            <person name="Dalin E."/>
            <person name="Tice H."/>
            <person name="Pitluck S."/>
            <person name="Sims D."/>
            <person name="Brettin T."/>
            <person name="Bruce D."/>
            <person name="Detter J.C."/>
            <person name="Han C."/>
            <person name="Schmutz J."/>
            <person name="Larimer F."/>
            <person name="Land M."/>
            <person name="Hauser L."/>
            <person name="Kyrpides N."/>
            <person name="Mikhailova N."/>
            <person name="Brettar I."/>
            <person name="Rodrigues J."/>
            <person name="Konstantinidis K."/>
            <person name="Tiedje J."/>
            <person name="Richardson P."/>
        </authorList>
    </citation>
    <scope>NUCLEOTIDE SEQUENCE [LARGE SCALE GENOMIC DNA]</scope>
    <source>
        <strain>OS185</strain>
    </source>
</reference>
<organism>
    <name type="scientific">Shewanella baltica (strain OS185)</name>
    <dbReference type="NCBI Taxonomy" id="402882"/>
    <lineage>
        <taxon>Bacteria</taxon>
        <taxon>Pseudomonadati</taxon>
        <taxon>Pseudomonadota</taxon>
        <taxon>Gammaproteobacteria</taxon>
        <taxon>Alteromonadales</taxon>
        <taxon>Shewanellaceae</taxon>
        <taxon>Shewanella</taxon>
    </lineage>
</organism>
<name>RNFE_SHEB8</name>
<sequence>MTNYREIAWQGLWKNNPGLVQLLGLCPLLAVTATITNALGLGLATMLVLIGSNILVSLVRDYVPKEIRIPVFVMIIAALVTTVQLLINAYAYGLYLSLGIFLPLIVTNCIIIGRAEAFASRNNAFSAAFDGLMMGLGFTLVLTVLGATREILGQGTLFDGADQLLGPWAKSLTIHLWQVDTPFLLAMLPPGAFIVMGLLIALKNVIDKKVKERQPQVAAEPSVTRARITKVG</sequence>
<protein>
    <recommendedName>
        <fullName evidence="1">Ion-translocating oxidoreductase complex subunit E</fullName>
        <ecNumber evidence="1">7.-.-.-</ecNumber>
    </recommendedName>
    <alternativeName>
        <fullName evidence="1">Rnf electron transport complex subunit E</fullName>
    </alternativeName>
</protein>
<gene>
    <name evidence="1" type="primary">rnfE</name>
    <name type="ordered locus">Shew185_2060</name>
</gene>
<dbReference type="EC" id="7.-.-.-" evidence="1"/>
<dbReference type="EMBL" id="CP000753">
    <property type="protein sequence ID" value="ABS08202.1"/>
    <property type="molecule type" value="Genomic_DNA"/>
</dbReference>
<dbReference type="RefSeq" id="WP_006081538.1">
    <property type="nucleotide sequence ID" value="NC_009665.1"/>
</dbReference>
<dbReference type="SMR" id="A6WN13"/>
<dbReference type="GeneID" id="11772257"/>
<dbReference type="KEGG" id="sbm:Shew185_2060"/>
<dbReference type="HOGENOM" id="CLU_046659_1_0_6"/>
<dbReference type="GO" id="GO:0005886">
    <property type="term" value="C:plasma membrane"/>
    <property type="evidence" value="ECO:0007669"/>
    <property type="project" value="UniProtKB-SubCell"/>
</dbReference>
<dbReference type="GO" id="GO:0022900">
    <property type="term" value="P:electron transport chain"/>
    <property type="evidence" value="ECO:0007669"/>
    <property type="project" value="UniProtKB-UniRule"/>
</dbReference>
<dbReference type="HAMAP" id="MF_00478">
    <property type="entry name" value="RsxE_RnfE"/>
    <property type="match status" value="1"/>
</dbReference>
<dbReference type="InterPro" id="IPR003667">
    <property type="entry name" value="NqrDE/RnfAE"/>
</dbReference>
<dbReference type="InterPro" id="IPR010968">
    <property type="entry name" value="RnfE"/>
</dbReference>
<dbReference type="NCBIfam" id="NF009070">
    <property type="entry name" value="PRK12405.1"/>
    <property type="match status" value="1"/>
</dbReference>
<dbReference type="NCBIfam" id="TIGR01948">
    <property type="entry name" value="rnfE"/>
    <property type="match status" value="1"/>
</dbReference>
<dbReference type="PANTHER" id="PTHR30586">
    <property type="entry name" value="ELECTRON TRANSPORT COMPLEX PROTEIN RNFE"/>
    <property type="match status" value="1"/>
</dbReference>
<dbReference type="PANTHER" id="PTHR30586:SF0">
    <property type="entry name" value="ION-TRANSLOCATING OXIDOREDUCTASE COMPLEX SUBUNIT E"/>
    <property type="match status" value="1"/>
</dbReference>
<dbReference type="Pfam" id="PF02508">
    <property type="entry name" value="Rnf-Nqr"/>
    <property type="match status" value="1"/>
</dbReference>
<dbReference type="PIRSF" id="PIRSF006102">
    <property type="entry name" value="NQR_DE"/>
    <property type="match status" value="1"/>
</dbReference>
<proteinExistence type="inferred from homology"/>
<keyword id="KW-0997">Cell inner membrane</keyword>
<keyword id="KW-1003">Cell membrane</keyword>
<keyword id="KW-0249">Electron transport</keyword>
<keyword id="KW-0472">Membrane</keyword>
<keyword id="KW-1278">Translocase</keyword>
<keyword id="KW-0812">Transmembrane</keyword>
<keyword id="KW-1133">Transmembrane helix</keyword>
<keyword id="KW-0813">Transport</keyword>
<evidence type="ECO:0000255" key="1">
    <source>
        <dbReference type="HAMAP-Rule" id="MF_00478"/>
    </source>
</evidence>